<sequence length="289" mass="31791">MTSSENLDSHRLRLDVVTIFPEYLDPLRHALLGKAIEDGILEVGVHDLRNWATGGHKAVDDTPYGGGPGMVMKPEVWGPALDDVAAGRVSGAELDSASLHLKNVRHDELGGVEKRAYVVEEDRDLPLLLVPTPAGKPFTQADAQAWSNEEHIVFACGRYEGIDQRVIDDAANRYRVREVSIGDYVLIGGEVAVLVIAEAVVRLIPGVLGNRRSHEEDSFSDGLLEGPSYTKPRTWRGLDVPEVLFSGNHAKVDRWRRDQALLRTQAIRPELIDASLLDSTDLKVLGLDK</sequence>
<dbReference type="EC" id="2.1.1.228"/>
<dbReference type="EMBL" id="BA000036">
    <property type="protein sequence ID" value="BAB99443.1"/>
    <property type="status" value="ALT_INIT"/>
    <property type="molecule type" value="Genomic_DNA"/>
</dbReference>
<dbReference type="EMBL" id="BX927154">
    <property type="protein sequence ID" value="CAF20388.1"/>
    <property type="molecule type" value="Genomic_DNA"/>
</dbReference>
<dbReference type="RefSeq" id="NP_601253.1">
    <property type="nucleotide sequence ID" value="NC_003450.3"/>
</dbReference>
<dbReference type="SMR" id="Q8NNX7"/>
<dbReference type="STRING" id="196627.cg2249"/>
<dbReference type="KEGG" id="cgb:cg2249"/>
<dbReference type="KEGG" id="cgl:Cgl2050"/>
<dbReference type="PATRIC" id="fig|196627.13.peg.1987"/>
<dbReference type="eggNOG" id="COG0336">
    <property type="taxonomic scope" value="Bacteria"/>
</dbReference>
<dbReference type="HOGENOM" id="CLU_047363_0_0_11"/>
<dbReference type="OrthoDB" id="9807416at2"/>
<dbReference type="BioCyc" id="CORYNE:G18NG-11642-MONOMER"/>
<dbReference type="Proteomes" id="UP000000582">
    <property type="component" value="Chromosome"/>
</dbReference>
<dbReference type="Proteomes" id="UP000001009">
    <property type="component" value="Chromosome"/>
</dbReference>
<dbReference type="GO" id="GO:0005829">
    <property type="term" value="C:cytosol"/>
    <property type="evidence" value="ECO:0007669"/>
    <property type="project" value="TreeGrafter"/>
</dbReference>
<dbReference type="GO" id="GO:0052906">
    <property type="term" value="F:tRNA (guanine(37)-N1)-methyltransferase activity"/>
    <property type="evidence" value="ECO:0007669"/>
    <property type="project" value="UniProtKB-UniRule"/>
</dbReference>
<dbReference type="GO" id="GO:0002939">
    <property type="term" value="P:tRNA N1-guanine methylation"/>
    <property type="evidence" value="ECO:0007669"/>
    <property type="project" value="TreeGrafter"/>
</dbReference>
<dbReference type="CDD" id="cd18080">
    <property type="entry name" value="TrmD-like"/>
    <property type="match status" value="1"/>
</dbReference>
<dbReference type="Gene3D" id="3.40.1280.10">
    <property type="match status" value="1"/>
</dbReference>
<dbReference type="Gene3D" id="1.10.1270.20">
    <property type="entry name" value="tRNA(m1g37)methyltransferase, domain 2"/>
    <property type="match status" value="1"/>
</dbReference>
<dbReference type="HAMAP" id="MF_00605">
    <property type="entry name" value="TrmD"/>
    <property type="match status" value="1"/>
</dbReference>
<dbReference type="InterPro" id="IPR029028">
    <property type="entry name" value="Alpha/beta_knot_MTases"/>
</dbReference>
<dbReference type="InterPro" id="IPR023148">
    <property type="entry name" value="tRNA_m1G_MeTrfase_C_sf"/>
</dbReference>
<dbReference type="InterPro" id="IPR002649">
    <property type="entry name" value="tRNA_m1G_MeTrfase_TrmD"/>
</dbReference>
<dbReference type="InterPro" id="IPR029026">
    <property type="entry name" value="tRNA_m1G_MTases_N"/>
</dbReference>
<dbReference type="InterPro" id="IPR016009">
    <property type="entry name" value="tRNA_MeTrfase_TRMD/TRM10"/>
</dbReference>
<dbReference type="NCBIfam" id="NF000648">
    <property type="entry name" value="PRK00026.1"/>
    <property type="match status" value="1"/>
</dbReference>
<dbReference type="PANTHER" id="PTHR46417">
    <property type="entry name" value="TRNA (GUANINE-N(1)-)-METHYLTRANSFERASE"/>
    <property type="match status" value="1"/>
</dbReference>
<dbReference type="PANTHER" id="PTHR46417:SF1">
    <property type="entry name" value="TRNA (GUANINE-N(1)-)-METHYLTRANSFERASE"/>
    <property type="match status" value="1"/>
</dbReference>
<dbReference type="Pfam" id="PF01746">
    <property type="entry name" value="tRNA_m1G_MT"/>
    <property type="match status" value="2"/>
</dbReference>
<dbReference type="PIRSF" id="PIRSF000386">
    <property type="entry name" value="tRNA_mtase"/>
    <property type="match status" value="1"/>
</dbReference>
<dbReference type="SUPFAM" id="SSF75217">
    <property type="entry name" value="alpha/beta knot"/>
    <property type="match status" value="1"/>
</dbReference>
<feature type="chain" id="PRO_0000060365" description="tRNA (guanine-N(1)-)-methyltransferase">
    <location>
        <begin position="1"/>
        <end position="289"/>
    </location>
</feature>
<feature type="region of interest" description="Insert">
    <location>
        <begin position="90"/>
        <end position="123"/>
    </location>
</feature>
<feature type="binding site" evidence="1">
    <location>
        <position position="157"/>
    </location>
    <ligand>
        <name>S-adenosyl-L-methionine</name>
        <dbReference type="ChEBI" id="CHEBI:59789"/>
    </ligand>
</feature>
<feature type="binding site" evidence="1">
    <location>
        <begin position="181"/>
        <end position="186"/>
    </location>
    <ligand>
        <name>S-adenosyl-L-methionine</name>
        <dbReference type="ChEBI" id="CHEBI:59789"/>
    </ligand>
</feature>
<keyword id="KW-0963">Cytoplasm</keyword>
<keyword id="KW-0489">Methyltransferase</keyword>
<keyword id="KW-1185">Reference proteome</keyword>
<keyword id="KW-0949">S-adenosyl-L-methionine</keyword>
<keyword id="KW-0808">Transferase</keyword>
<keyword id="KW-0819">tRNA processing</keyword>
<protein>
    <recommendedName>
        <fullName>tRNA (guanine-N(1)-)-methyltransferase</fullName>
        <ecNumber>2.1.1.228</ecNumber>
    </recommendedName>
    <alternativeName>
        <fullName>M1G-methyltransferase</fullName>
    </alternativeName>
    <alternativeName>
        <fullName>tRNA [GM37] methyltransferase</fullName>
    </alternativeName>
</protein>
<proteinExistence type="inferred from homology"/>
<reference key="1">
    <citation type="journal article" date="2003" name="Appl. Microbiol. Biotechnol.">
        <title>The Corynebacterium glutamicum genome: features and impacts on biotechnological processes.</title>
        <authorList>
            <person name="Ikeda M."/>
            <person name="Nakagawa S."/>
        </authorList>
    </citation>
    <scope>NUCLEOTIDE SEQUENCE [LARGE SCALE GENOMIC DNA]</scope>
    <source>
        <strain>ATCC 13032 / DSM 20300 / JCM 1318 / BCRC 11384 / CCUG 27702 / LMG 3730 / NBRC 12168 / NCIMB 10025 / NRRL B-2784 / 534</strain>
    </source>
</reference>
<reference key="2">
    <citation type="journal article" date="2003" name="J. Biotechnol.">
        <title>The complete Corynebacterium glutamicum ATCC 13032 genome sequence and its impact on the production of L-aspartate-derived amino acids and vitamins.</title>
        <authorList>
            <person name="Kalinowski J."/>
            <person name="Bathe B."/>
            <person name="Bartels D."/>
            <person name="Bischoff N."/>
            <person name="Bott M."/>
            <person name="Burkovski A."/>
            <person name="Dusch N."/>
            <person name="Eggeling L."/>
            <person name="Eikmanns B.J."/>
            <person name="Gaigalat L."/>
            <person name="Goesmann A."/>
            <person name="Hartmann M."/>
            <person name="Huthmacher K."/>
            <person name="Kraemer R."/>
            <person name="Linke B."/>
            <person name="McHardy A.C."/>
            <person name="Meyer F."/>
            <person name="Moeckel B."/>
            <person name="Pfefferle W."/>
            <person name="Puehler A."/>
            <person name="Rey D.A."/>
            <person name="Rueckert C."/>
            <person name="Rupp O."/>
            <person name="Sahm H."/>
            <person name="Wendisch V.F."/>
            <person name="Wiegraebe I."/>
            <person name="Tauch A."/>
        </authorList>
    </citation>
    <scope>NUCLEOTIDE SEQUENCE [LARGE SCALE GENOMIC DNA]</scope>
    <source>
        <strain>ATCC 13032 / DSM 20300 / JCM 1318 / BCRC 11384 / CCUG 27702 / LMG 3730 / NBRC 12168 / NCIMB 10025 / NRRL B-2784 / 534</strain>
    </source>
</reference>
<comment type="function">
    <text evidence="1">Specifically methylates guanosine-37 in various tRNAs.</text>
</comment>
<comment type="catalytic activity">
    <reaction>
        <text>guanosine(37) in tRNA + S-adenosyl-L-methionine = N(1)-methylguanosine(37) in tRNA + S-adenosyl-L-homocysteine + H(+)</text>
        <dbReference type="Rhea" id="RHEA:36899"/>
        <dbReference type="Rhea" id="RHEA-COMP:10145"/>
        <dbReference type="Rhea" id="RHEA-COMP:10147"/>
        <dbReference type="ChEBI" id="CHEBI:15378"/>
        <dbReference type="ChEBI" id="CHEBI:57856"/>
        <dbReference type="ChEBI" id="CHEBI:59789"/>
        <dbReference type="ChEBI" id="CHEBI:73542"/>
        <dbReference type="ChEBI" id="CHEBI:74269"/>
        <dbReference type="EC" id="2.1.1.228"/>
    </reaction>
</comment>
<comment type="subunit">
    <text evidence="1">Homodimer.</text>
</comment>
<comment type="subcellular location">
    <subcellularLocation>
        <location evidence="2">Cytoplasm</location>
    </subcellularLocation>
</comment>
<comment type="similarity">
    <text evidence="2">Belongs to the RNA methyltransferase TrmD family.</text>
</comment>
<comment type="sequence caution" evidence="2">
    <conflict type="erroneous initiation">
        <sequence resource="EMBL-CDS" id="BAB99443"/>
    </conflict>
</comment>
<gene>
    <name type="primary">trmD</name>
    <name type="ordered locus">Cgl2050</name>
    <name type="ordered locus">cg2249</name>
</gene>
<organism>
    <name type="scientific">Corynebacterium glutamicum (strain ATCC 13032 / DSM 20300 / JCM 1318 / BCRC 11384 / CCUG 27702 / LMG 3730 / NBRC 12168 / NCIMB 10025 / NRRL B-2784 / 534)</name>
    <dbReference type="NCBI Taxonomy" id="196627"/>
    <lineage>
        <taxon>Bacteria</taxon>
        <taxon>Bacillati</taxon>
        <taxon>Actinomycetota</taxon>
        <taxon>Actinomycetes</taxon>
        <taxon>Mycobacteriales</taxon>
        <taxon>Corynebacteriaceae</taxon>
        <taxon>Corynebacterium</taxon>
    </lineage>
</organism>
<evidence type="ECO:0000250" key="1"/>
<evidence type="ECO:0000305" key="2"/>
<name>TRMD_CORGL</name>
<accession>Q8NNX7</accession>